<protein>
    <recommendedName>
        <fullName evidence="1">Probable septum site-determining protein MinC</fullName>
    </recommendedName>
</protein>
<proteinExistence type="inferred from homology"/>
<accession>A6WMJ9</accession>
<feature type="chain" id="PRO_1000047856" description="Probable septum site-determining protein MinC">
    <location>
        <begin position="1"/>
        <end position="221"/>
    </location>
</feature>
<gene>
    <name evidence="1" type="primary">minC</name>
    <name type="ordered locus">Shew185_1895</name>
</gene>
<keyword id="KW-0131">Cell cycle</keyword>
<keyword id="KW-0132">Cell division</keyword>
<keyword id="KW-0717">Septation</keyword>
<dbReference type="EMBL" id="CP000753">
    <property type="protein sequence ID" value="ABS08038.1"/>
    <property type="molecule type" value="Genomic_DNA"/>
</dbReference>
<dbReference type="RefSeq" id="WP_006081363.1">
    <property type="nucleotide sequence ID" value="NC_009665.1"/>
</dbReference>
<dbReference type="SMR" id="A6WMJ9"/>
<dbReference type="GeneID" id="11772108"/>
<dbReference type="KEGG" id="sbm:Shew185_1895"/>
<dbReference type="HOGENOM" id="CLU_067812_0_1_6"/>
<dbReference type="GO" id="GO:0000902">
    <property type="term" value="P:cell morphogenesis"/>
    <property type="evidence" value="ECO:0007669"/>
    <property type="project" value="InterPro"/>
</dbReference>
<dbReference type="GO" id="GO:0000917">
    <property type="term" value="P:division septum assembly"/>
    <property type="evidence" value="ECO:0007669"/>
    <property type="project" value="UniProtKB-KW"/>
</dbReference>
<dbReference type="GO" id="GO:0051302">
    <property type="term" value="P:regulation of cell division"/>
    <property type="evidence" value="ECO:0007669"/>
    <property type="project" value="InterPro"/>
</dbReference>
<dbReference type="GO" id="GO:1901891">
    <property type="term" value="P:regulation of cell septum assembly"/>
    <property type="evidence" value="ECO:0007669"/>
    <property type="project" value="InterPro"/>
</dbReference>
<dbReference type="Gene3D" id="2.160.20.70">
    <property type="match status" value="1"/>
</dbReference>
<dbReference type="Gene3D" id="3.30.70.260">
    <property type="match status" value="1"/>
</dbReference>
<dbReference type="HAMAP" id="MF_00267">
    <property type="entry name" value="MinC"/>
    <property type="match status" value="1"/>
</dbReference>
<dbReference type="InterPro" id="IPR016098">
    <property type="entry name" value="CAP/MinC_C"/>
</dbReference>
<dbReference type="InterPro" id="IPR013033">
    <property type="entry name" value="MinC"/>
</dbReference>
<dbReference type="InterPro" id="IPR036145">
    <property type="entry name" value="MinC_C_sf"/>
</dbReference>
<dbReference type="InterPro" id="IPR007874">
    <property type="entry name" value="MinC_N"/>
</dbReference>
<dbReference type="InterPro" id="IPR005526">
    <property type="entry name" value="Septum_form_inhib_MinC_C"/>
</dbReference>
<dbReference type="NCBIfam" id="TIGR01222">
    <property type="entry name" value="minC"/>
    <property type="match status" value="1"/>
</dbReference>
<dbReference type="PANTHER" id="PTHR34108">
    <property type="entry name" value="SEPTUM SITE-DETERMINING PROTEIN MINC"/>
    <property type="match status" value="1"/>
</dbReference>
<dbReference type="PANTHER" id="PTHR34108:SF1">
    <property type="entry name" value="SEPTUM SITE-DETERMINING PROTEIN MINC"/>
    <property type="match status" value="1"/>
</dbReference>
<dbReference type="Pfam" id="PF03775">
    <property type="entry name" value="MinC_C"/>
    <property type="match status" value="1"/>
</dbReference>
<dbReference type="Pfam" id="PF05209">
    <property type="entry name" value="MinC_N"/>
    <property type="match status" value="1"/>
</dbReference>
<dbReference type="SUPFAM" id="SSF63848">
    <property type="entry name" value="Cell-division inhibitor MinC, C-terminal domain"/>
    <property type="match status" value="1"/>
</dbReference>
<sequence>MSKPSLELKGASFTLSVLHINSSDLQAVMTELDSKLAQAPQFFLGAPLVVNLSAIQHDSLNLSALKDLLISRQLVIVGITGATTVLSKQAKDLGLAIVKAGKQSSTPPPAPRQTKIVKQNIRSGQQVYAKNGDLIIFGAVGNGAEVIADGSIHIYGALRGKAMAGAAGDTSAVIIAHSLEAELVSIAGQYWLAENLQQHSSDKSGCIRLDGESLMVESLPL</sequence>
<reference key="1">
    <citation type="submission" date="2007-07" db="EMBL/GenBank/DDBJ databases">
        <title>Complete sequence of chromosome of Shewanella baltica OS185.</title>
        <authorList>
            <consortium name="US DOE Joint Genome Institute"/>
            <person name="Copeland A."/>
            <person name="Lucas S."/>
            <person name="Lapidus A."/>
            <person name="Barry K."/>
            <person name="Glavina del Rio T."/>
            <person name="Dalin E."/>
            <person name="Tice H."/>
            <person name="Pitluck S."/>
            <person name="Sims D."/>
            <person name="Brettin T."/>
            <person name="Bruce D."/>
            <person name="Detter J.C."/>
            <person name="Han C."/>
            <person name="Schmutz J."/>
            <person name="Larimer F."/>
            <person name="Land M."/>
            <person name="Hauser L."/>
            <person name="Kyrpides N."/>
            <person name="Mikhailova N."/>
            <person name="Brettar I."/>
            <person name="Rodrigues J."/>
            <person name="Konstantinidis K."/>
            <person name="Tiedje J."/>
            <person name="Richardson P."/>
        </authorList>
    </citation>
    <scope>NUCLEOTIDE SEQUENCE [LARGE SCALE GENOMIC DNA]</scope>
    <source>
        <strain>OS185</strain>
    </source>
</reference>
<organism>
    <name type="scientific">Shewanella baltica (strain OS185)</name>
    <dbReference type="NCBI Taxonomy" id="402882"/>
    <lineage>
        <taxon>Bacteria</taxon>
        <taxon>Pseudomonadati</taxon>
        <taxon>Pseudomonadota</taxon>
        <taxon>Gammaproteobacteria</taxon>
        <taxon>Alteromonadales</taxon>
        <taxon>Shewanellaceae</taxon>
        <taxon>Shewanella</taxon>
    </lineage>
</organism>
<evidence type="ECO:0000255" key="1">
    <source>
        <dbReference type="HAMAP-Rule" id="MF_00267"/>
    </source>
</evidence>
<comment type="function">
    <text evidence="1">Cell division inhibitor that blocks the formation of polar Z ring septums. Rapidly oscillates between the poles of the cell to destabilize FtsZ filaments that have formed before they mature into polar Z rings. Prevents FtsZ polymerization.</text>
</comment>
<comment type="subunit">
    <text evidence="1">Interacts with MinD and FtsZ.</text>
</comment>
<comment type="similarity">
    <text evidence="1">Belongs to the MinC family.</text>
</comment>
<name>MINC_SHEB8</name>